<comment type="similarity">
    <text evidence="2">Belongs to the universal ribosomal protein uL22 family.</text>
</comment>
<gene>
    <name type="primary">RPL17</name>
</gene>
<sequence>MGRYAIEPENPAKSCKARGEDLRVHFKNTRETAQAIKGMHLKKALRYLNDVIEKKQIIPFRRFSGGVGRKAQAKNFKTPGSQGRWPKKSAQFLIQLLRNAESNAEVKMLNTDALVIDHIQVNRAAHLRRRTYRAHGRINPYMTSPCHIEMFLVEKDEAVPKGEDDTAQKKKVSQKKLKKQKLKAALSGGAD</sequence>
<feature type="chain" id="PRO_0000323399" description="Large ribosomal subunit protein uL22">
    <location>
        <begin position="1"/>
        <end position="191"/>
    </location>
</feature>
<feature type="region of interest" description="Disordered" evidence="1">
    <location>
        <begin position="159"/>
        <end position="191"/>
    </location>
</feature>
<feature type="compositionally biased region" description="Basic and acidic residues" evidence="1">
    <location>
        <begin position="159"/>
        <end position="168"/>
    </location>
</feature>
<feature type="compositionally biased region" description="Basic residues" evidence="1">
    <location>
        <begin position="169"/>
        <end position="182"/>
    </location>
</feature>
<name>RL17_SUBDO</name>
<dbReference type="EMBL" id="AY857430">
    <property type="protein sequence ID" value="AAX48849.1"/>
    <property type="molecule type" value="mRNA"/>
</dbReference>
<dbReference type="SMR" id="Q4KTG9"/>
<dbReference type="GO" id="GO:0022625">
    <property type="term" value="C:cytosolic large ribosomal subunit"/>
    <property type="evidence" value="ECO:0007669"/>
    <property type="project" value="TreeGrafter"/>
</dbReference>
<dbReference type="GO" id="GO:0003735">
    <property type="term" value="F:structural constituent of ribosome"/>
    <property type="evidence" value="ECO:0007669"/>
    <property type="project" value="InterPro"/>
</dbReference>
<dbReference type="GO" id="GO:0002181">
    <property type="term" value="P:cytoplasmic translation"/>
    <property type="evidence" value="ECO:0007669"/>
    <property type="project" value="TreeGrafter"/>
</dbReference>
<dbReference type="CDD" id="cd00336">
    <property type="entry name" value="Ribosomal_L22"/>
    <property type="match status" value="1"/>
</dbReference>
<dbReference type="FunFam" id="3.90.470.10:FF:000003">
    <property type="entry name" value="60S ribosomal protein L17"/>
    <property type="match status" value="1"/>
</dbReference>
<dbReference type="Gene3D" id="3.90.470.10">
    <property type="entry name" value="Ribosomal protein L22/L17"/>
    <property type="match status" value="1"/>
</dbReference>
<dbReference type="InterPro" id="IPR001063">
    <property type="entry name" value="Ribosomal_uL22"/>
</dbReference>
<dbReference type="InterPro" id="IPR018260">
    <property type="entry name" value="Ribosomal_uL22_CS"/>
</dbReference>
<dbReference type="InterPro" id="IPR005721">
    <property type="entry name" value="Ribosomal_uL22_euk/arc"/>
</dbReference>
<dbReference type="InterPro" id="IPR036394">
    <property type="entry name" value="Ribosomal_uL22_sf"/>
</dbReference>
<dbReference type="NCBIfam" id="TIGR01038">
    <property type="entry name" value="uL22_arch_euk"/>
    <property type="match status" value="1"/>
</dbReference>
<dbReference type="PANTHER" id="PTHR11593">
    <property type="entry name" value="60S RIBOSOMAL PROTEIN L17"/>
    <property type="match status" value="1"/>
</dbReference>
<dbReference type="PANTHER" id="PTHR11593:SF10">
    <property type="entry name" value="60S RIBOSOMAL PROTEIN L17"/>
    <property type="match status" value="1"/>
</dbReference>
<dbReference type="Pfam" id="PF00237">
    <property type="entry name" value="Ribosomal_L22"/>
    <property type="match status" value="1"/>
</dbReference>
<dbReference type="SUPFAM" id="SSF54843">
    <property type="entry name" value="Ribosomal protein L22"/>
    <property type="match status" value="1"/>
</dbReference>
<dbReference type="PROSITE" id="PS00464">
    <property type="entry name" value="RIBOSOMAL_L22"/>
    <property type="match status" value="1"/>
</dbReference>
<accession>Q4KTG9</accession>
<organism>
    <name type="scientific">Suberites domuncula</name>
    <name type="common">Sponge</name>
    <dbReference type="NCBI Taxonomy" id="55567"/>
    <lineage>
        <taxon>Eukaryota</taxon>
        <taxon>Metazoa</taxon>
        <taxon>Porifera</taxon>
        <taxon>Demospongiae</taxon>
        <taxon>Heteroscleromorpha</taxon>
        <taxon>Suberitida</taxon>
        <taxon>Suberitidae</taxon>
        <taxon>Suberites</taxon>
    </lineage>
</organism>
<reference key="1">
    <citation type="journal article" date="2006" name="Gene">
        <title>The complete set of ribosomal proteins from the marine sponge Suberites domuncula.</title>
        <authorList>
            <person name="Perina D."/>
            <person name="Cetkovic H."/>
            <person name="Harcet M."/>
            <person name="Premzl M."/>
            <person name="Lukic-Bilela L."/>
            <person name="Mueller W.E.G."/>
            <person name="Gamulin V."/>
        </authorList>
    </citation>
    <scope>NUCLEOTIDE SEQUENCE [MRNA]</scope>
</reference>
<proteinExistence type="evidence at transcript level"/>
<protein>
    <recommendedName>
        <fullName evidence="2">Large ribosomal subunit protein uL22</fullName>
    </recommendedName>
    <alternativeName>
        <fullName>60S ribosomal protein L17</fullName>
    </alternativeName>
</protein>
<evidence type="ECO:0000256" key="1">
    <source>
        <dbReference type="SAM" id="MobiDB-lite"/>
    </source>
</evidence>
<evidence type="ECO:0000305" key="2"/>
<keyword id="KW-0687">Ribonucleoprotein</keyword>
<keyword id="KW-0689">Ribosomal protein</keyword>